<reference key="1">
    <citation type="submission" date="2005-10" db="EMBL/GenBank/DDBJ databases">
        <title>Complete sequence of chromosome 1 of Burkholderia sp. 383.</title>
        <authorList>
            <consortium name="US DOE Joint Genome Institute"/>
            <person name="Copeland A."/>
            <person name="Lucas S."/>
            <person name="Lapidus A."/>
            <person name="Barry K."/>
            <person name="Detter J.C."/>
            <person name="Glavina T."/>
            <person name="Hammon N."/>
            <person name="Israni S."/>
            <person name="Pitluck S."/>
            <person name="Chain P."/>
            <person name="Malfatti S."/>
            <person name="Shin M."/>
            <person name="Vergez L."/>
            <person name="Schmutz J."/>
            <person name="Larimer F."/>
            <person name="Land M."/>
            <person name="Kyrpides N."/>
            <person name="Lykidis A."/>
            <person name="Richardson P."/>
        </authorList>
    </citation>
    <scope>NUCLEOTIDE SEQUENCE [LARGE SCALE GENOMIC DNA]</scope>
    <source>
        <strain>ATCC 17760 / DSM 23089 / LMG 22485 / NCIMB 9086 / R18194 / 383</strain>
    </source>
</reference>
<dbReference type="EC" id="3.4.21.92" evidence="1"/>
<dbReference type="EMBL" id="CP000151">
    <property type="protein sequence ID" value="ABB08818.1"/>
    <property type="molecule type" value="Genomic_DNA"/>
</dbReference>
<dbReference type="RefSeq" id="WP_010092137.1">
    <property type="nucleotide sequence ID" value="NZ_LDWP01000007.1"/>
</dbReference>
<dbReference type="SMR" id="Q39FE8"/>
<dbReference type="MEROPS" id="S14.001"/>
<dbReference type="GeneID" id="93191712"/>
<dbReference type="KEGG" id="bur:Bcep18194_A5224"/>
<dbReference type="HOGENOM" id="CLU_058707_3_2_4"/>
<dbReference type="Proteomes" id="UP000002705">
    <property type="component" value="Chromosome 1"/>
</dbReference>
<dbReference type="GO" id="GO:0005737">
    <property type="term" value="C:cytoplasm"/>
    <property type="evidence" value="ECO:0007669"/>
    <property type="project" value="UniProtKB-SubCell"/>
</dbReference>
<dbReference type="GO" id="GO:0009368">
    <property type="term" value="C:endopeptidase Clp complex"/>
    <property type="evidence" value="ECO:0007669"/>
    <property type="project" value="TreeGrafter"/>
</dbReference>
<dbReference type="GO" id="GO:0004176">
    <property type="term" value="F:ATP-dependent peptidase activity"/>
    <property type="evidence" value="ECO:0007669"/>
    <property type="project" value="InterPro"/>
</dbReference>
<dbReference type="GO" id="GO:0051117">
    <property type="term" value="F:ATPase binding"/>
    <property type="evidence" value="ECO:0007669"/>
    <property type="project" value="TreeGrafter"/>
</dbReference>
<dbReference type="GO" id="GO:0004252">
    <property type="term" value="F:serine-type endopeptidase activity"/>
    <property type="evidence" value="ECO:0007669"/>
    <property type="project" value="UniProtKB-UniRule"/>
</dbReference>
<dbReference type="GO" id="GO:0006515">
    <property type="term" value="P:protein quality control for misfolded or incompletely synthesized proteins"/>
    <property type="evidence" value="ECO:0007669"/>
    <property type="project" value="TreeGrafter"/>
</dbReference>
<dbReference type="CDD" id="cd07017">
    <property type="entry name" value="S14_ClpP_2"/>
    <property type="match status" value="1"/>
</dbReference>
<dbReference type="FunFam" id="3.90.226.10:FF:000001">
    <property type="entry name" value="ATP-dependent Clp protease proteolytic subunit"/>
    <property type="match status" value="1"/>
</dbReference>
<dbReference type="Gene3D" id="3.90.226.10">
    <property type="entry name" value="2-enoyl-CoA Hydratase, Chain A, domain 1"/>
    <property type="match status" value="1"/>
</dbReference>
<dbReference type="HAMAP" id="MF_00444">
    <property type="entry name" value="ClpP"/>
    <property type="match status" value="1"/>
</dbReference>
<dbReference type="InterPro" id="IPR001907">
    <property type="entry name" value="ClpP"/>
</dbReference>
<dbReference type="InterPro" id="IPR029045">
    <property type="entry name" value="ClpP/crotonase-like_dom_sf"/>
</dbReference>
<dbReference type="InterPro" id="IPR023562">
    <property type="entry name" value="ClpP/TepA"/>
</dbReference>
<dbReference type="InterPro" id="IPR033135">
    <property type="entry name" value="ClpP_His_AS"/>
</dbReference>
<dbReference type="InterPro" id="IPR018215">
    <property type="entry name" value="ClpP_Ser_AS"/>
</dbReference>
<dbReference type="NCBIfam" id="TIGR00493">
    <property type="entry name" value="clpP"/>
    <property type="match status" value="1"/>
</dbReference>
<dbReference type="NCBIfam" id="NF001368">
    <property type="entry name" value="PRK00277.1"/>
    <property type="match status" value="1"/>
</dbReference>
<dbReference type="NCBIfam" id="NF009205">
    <property type="entry name" value="PRK12553.1"/>
    <property type="match status" value="1"/>
</dbReference>
<dbReference type="PANTHER" id="PTHR10381">
    <property type="entry name" value="ATP-DEPENDENT CLP PROTEASE PROTEOLYTIC SUBUNIT"/>
    <property type="match status" value="1"/>
</dbReference>
<dbReference type="PANTHER" id="PTHR10381:SF70">
    <property type="entry name" value="ATP-DEPENDENT CLP PROTEASE PROTEOLYTIC SUBUNIT"/>
    <property type="match status" value="1"/>
</dbReference>
<dbReference type="Pfam" id="PF00574">
    <property type="entry name" value="CLP_protease"/>
    <property type="match status" value="1"/>
</dbReference>
<dbReference type="PRINTS" id="PR00127">
    <property type="entry name" value="CLPPROTEASEP"/>
</dbReference>
<dbReference type="SUPFAM" id="SSF52096">
    <property type="entry name" value="ClpP/crotonase"/>
    <property type="match status" value="1"/>
</dbReference>
<dbReference type="PROSITE" id="PS00382">
    <property type="entry name" value="CLP_PROTEASE_HIS"/>
    <property type="match status" value="1"/>
</dbReference>
<dbReference type="PROSITE" id="PS00381">
    <property type="entry name" value="CLP_PROTEASE_SER"/>
    <property type="match status" value="1"/>
</dbReference>
<evidence type="ECO:0000255" key="1">
    <source>
        <dbReference type="HAMAP-Rule" id="MF_00444"/>
    </source>
</evidence>
<gene>
    <name evidence="1" type="primary">clpP</name>
    <name type="ordered locus">Bcep18194_A5224</name>
</gene>
<feature type="chain" id="PRO_0000226433" description="ATP-dependent Clp protease proteolytic subunit">
    <location>
        <begin position="1"/>
        <end position="217"/>
    </location>
</feature>
<feature type="active site" description="Nucleophile" evidence="1">
    <location>
        <position position="121"/>
    </location>
</feature>
<feature type="active site" evidence="1">
    <location>
        <position position="146"/>
    </location>
</feature>
<sequence>MITRAELLDMLASNAPQGFEAQALGLVPIVVETSGRGERSYDIYSRLLKERLVFMVGEVNDQTANLVVAQLLFLESENPDKDISLYINSPGGSVSAGMAIYDTMQFIKPDVSTLCMGLAASMGAFLLASGAKGKRFALPNSRVMIHQPLGGARGQASDIEIQAREILYLKERLNQLLAQHTGQDVERIARDTDRDNFMSSEDAKAYGLIDQVLLKRP</sequence>
<proteinExistence type="inferred from homology"/>
<keyword id="KW-0963">Cytoplasm</keyword>
<keyword id="KW-0378">Hydrolase</keyword>
<keyword id="KW-0645">Protease</keyword>
<keyword id="KW-0720">Serine protease</keyword>
<protein>
    <recommendedName>
        <fullName evidence="1">ATP-dependent Clp protease proteolytic subunit</fullName>
        <ecNumber evidence="1">3.4.21.92</ecNumber>
    </recommendedName>
    <alternativeName>
        <fullName evidence="1">Endopeptidase Clp</fullName>
    </alternativeName>
</protein>
<accession>Q39FE8</accession>
<name>CLPP_BURL3</name>
<organism>
    <name type="scientific">Burkholderia lata (strain ATCC 17760 / DSM 23089 / LMG 22485 / NCIMB 9086 / R18194 / 383)</name>
    <dbReference type="NCBI Taxonomy" id="482957"/>
    <lineage>
        <taxon>Bacteria</taxon>
        <taxon>Pseudomonadati</taxon>
        <taxon>Pseudomonadota</taxon>
        <taxon>Betaproteobacteria</taxon>
        <taxon>Burkholderiales</taxon>
        <taxon>Burkholderiaceae</taxon>
        <taxon>Burkholderia</taxon>
        <taxon>Burkholderia cepacia complex</taxon>
    </lineage>
</organism>
<comment type="function">
    <text evidence="1">Cleaves peptides in various proteins in a process that requires ATP hydrolysis. Has a chymotrypsin-like activity. Plays a major role in the degradation of misfolded proteins.</text>
</comment>
<comment type="catalytic activity">
    <reaction evidence="1">
        <text>Hydrolysis of proteins to small peptides in the presence of ATP and magnesium. alpha-casein is the usual test substrate. In the absence of ATP, only oligopeptides shorter than five residues are hydrolyzed (such as succinyl-Leu-Tyr-|-NHMec, and Leu-Tyr-Leu-|-Tyr-Trp, in which cleavage of the -Tyr-|-Leu- and -Tyr-|-Trp bonds also occurs).</text>
        <dbReference type="EC" id="3.4.21.92"/>
    </reaction>
</comment>
<comment type="subunit">
    <text evidence="1">Fourteen ClpP subunits assemble into 2 heptameric rings which stack back to back to give a disk-like structure with a central cavity, resembling the structure of eukaryotic proteasomes.</text>
</comment>
<comment type="subcellular location">
    <subcellularLocation>
        <location evidence="1">Cytoplasm</location>
    </subcellularLocation>
</comment>
<comment type="similarity">
    <text evidence="1">Belongs to the peptidase S14 family.</text>
</comment>